<sequence length="251" mass="29359">MAETAVINHKKRKNSPRIVQSNDLTEAAYSLSRDQKRMLYLFVDQIRKSDGTLQEHDGICEIHVAKYAEIFGLTSAEASKDIRQALKSFAGKEVVFYRPEEDAGDEKGYESFPWFIKRAHSPSRGLYSVHINPYLIPFFIGLQNRFTQFRLSETKEITNPYAMRLYESLCQYRKPDGSGIVSLKIDWIIERYQLPQSYQRMPDFRRRFLQVCVNEINSRTPMRLSYIEKKKGRQTTHIVFSFRDITSMTTG</sequence>
<keyword id="KW-0002">3D-structure</keyword>
<keyword id="KW-0235">DNA replication</keyword>
<keyword id="KW-0238">DNA-binding</keyword>
<keyword id="KW-0614">Plasmid</keyword>
<keyword id="KW-0615">Plasmid copy control</keyword>
<geneLocation type="plasmid">
    <name>F</name>
</geneLocation>
<feature type="chain" id="PRO_0000068297" description="Replication initiation protein">
    <location>
        <begin position="1"/>
        <end position="251"/>
    </location>
</feature>
<feature type="DNA-binding region" description="H-T-H motif">
    <location>
        <begin position="75"/>
        <end position="83"/>
    </location>
</feature>
<feature type="DNA-binding region" description="H-T-H motif">
    <location>
        <begin position="200"/>
        <end position="207"/>
    </location>
</feature>
<feature type="region of interest" description="Dimerization">
    <location>
        <begin position="1"/>
        <end position="144"/>
    </location>
</feature>
<feature type="helix" evidence="4">
    <location>
        <begin position="6"/>
        <end position="8"/>
    </location>
</feature>
<feature type="turn" evidence="4">
    <location>
        <begin position="10"/>
        <end position="14"/>
    </location>
</feature>
<feature type="strand" evidence="5">
    <location>
        <begin position="17"/>
        <end position="21"/>
    </location>
</feature>
<feature type="helix" evidence="5">
    <location>
        <begin position="22"/>
        <end position="25"/>
    </location>
</feature>
<feature type="helix" evidence="5">
    <location>
        <begin position="33"/>
        <end position="48"/>
    </location>
</feature>
<feature type="strand" evidence="5">
    <location>
        <begin position="59"/>
        <end position="63"/>
    </location>
</feature>
<feature type="helix" evidence="5">
    <location>
        <begin position="64"/>
        <end position="71"/>
    </location>
</feature>
<feature type="helix" evidence="5">
    <location>
        <begin position="75"/>
        <end position="88"/>
    </location>
</feature>
<feature type="turn" evidence="5">
    <location>
        <begin position="89"/>
        <end position="91"/>
    </location>
</feature>
<feature type="strand" evidence="5">
    <location>
        <begin position="93"/>
        <end position="96"/>
    </location>
</feature>
<feature type="strand" evidence="5">
    <location>
        <begin position="110"/>
        <end position="117"/>
    </location>
</feature>
<feature type="strand" evidence="4">
    <location>
        <begin position="120"/>
        <end position="123"/>
    </location>
</feature>
<feature type="strand" evidence="5">
    <location>
        <begin position="126"/>
        <end position="131"/>
    </location>
</feature>
<feature type="helix" evidence="5">
    <location>
        <begin position="133"/>
        <end position="138"/>
    </location>
</feature>
<feature type="strand" evidence="5">
    <location>
        <begin position="144"/>
        <end position="150"/>
    </location>
</feature>
<feature type="helix" evidence="5">
    <location>
        <begin position="151"/>
        <end position="154"/>
    </location>
</feature>
<feature type="helix" evidence="5">
    <location>
        <begin position="160"/>
        <end position="171"/>
    </location>
</feature>
<feature type="turn" evidence="3">
    <location>
        <begin position="175"/>
        <end position="177"/>
    </location>
</feature>
<feature type="strand" evidence="5">
    <location>
        <begin position="179"/>
        <end position="184"/>
    </location>
</feature>
<feature type="helix" evidence="5">
    <location>
        <begin position="185"/>
        <end position="191"/>
    </location>
</feature>
<feature type="helix" evidence="5">
    <location>
        <begin position="196"/>
        <end position="198"/>
    </location>
</feature>
<feature type="helix" evidence="5">
    <location>
        <begin position="201"/>
        <end position="207"/>
    </location>
</feature>
<feature type="helix" evidence="5">
    <location>
        <begin position="209"/>
        <end position="219"/>
    </location>
</feature>
<feature type="strand" evidence="5">
    <location>
        <begin position="220"/>
        <end position="231"/>
    </location>
</feature>
<feature type="strand" evidence="5">
    <location>
        <begin position="234"/>
        <end position="244"/>
    </location>
</feature>
<feature type="helix" evidence="4">
    <location>
        <begin position="245"/>
        <end position="247"/>
    </location>
</feature>
<dbReference type="EMBL" id="J01724">
    <property type="protein sequence ID" value="AAA91062.1"/>
    <property type="molecule type" value="Genomic_DNA"/>
</dbReference>
<dbReference type="EMBL" id="M12987">
    <property type="protein sequence ID" value="AAA24901.1"/>
    <property type="molecule type" value="Genomic_DNA"/>
</dbReference>
<dbReference type="EMBL" id="AP001918">
    <property type="protein sequence ID" value="BAA97915.1"/>
    <property type="molecule type" value="Genomic_DNA"/>
</dbReference>
<dbReference type="EMBL" id="X03410">
    <property type="protein sequence ID" value="CAA27146.1"/>
    <property type="molecule type" value="Genomic_DNA"/>
</dbReference>
<dbReference type="EMBL" id="X04619">
    <property type="protein sequence ID" value="CAA28294.1"/>
    <property type="molecule type" value="Genomic_DNA"/>
</dbReference>
<dbReference type="PIR" id="A91487">
    <property type="entry name" value="QQECF"/>
</dbReference>
<dbReference type="RefSeq" id="NP_061424.1">
    <property type="nucleotide sequence ID" value="NC_002483.1"/>
</dbReference>
<dbReference type="RefSeq" id="WP_000852146.1">
    <property type="nucleotide sequence ID" value="NZ_STEB01000056.1"/>
</dbReference>
<dbReference type="PDB" id="1REP">
    <property type="method" value="X-ray"/>
    <property type="resolution" value="2.60 A"/>
    <property type="chains" value="C=1-251"/>
</dbReference>
<dbReference type="PDB" id="2Z9O">
    <property type="method" value="X-ray"/>
    <property type="resolution" value="3.14 A"/>
    <property type="chains" value="A/B=2-251"/>
</dbReference>
<dbReference type="PDB" id="7RVA">
    <property type="method" value="X-ray"/>
    <property type="resolution" value="1.89 A"/>
    <property type="chains" value="C=1-251"/>
</dbReference>
<dbReference type="PDB" id="7SDP">
    <property type="method" value="X-ray"/>
    <property type="resolution" value="3.01 A"/>
    <property type="chains" value="C=1-251"/>
</dbReference>
<dbReference type="PDB" id="7SGC">
    <property type="method" value="X-ray"/>
    <property type="resolution" value="2.70 A"/>
    <property type="chains" value="C=1-251"/>
</dbReference>
<dbReference type="PDB" id="7SOZ">
    <property type="method" value="X-ray"/>
    <property type="resolution" value="3.14 A"/>
    <property type="chains" value="C=1-251"/>
</dbReference>
<dbReference type="PDB" id="7SPM">
    <property type="method" value="X-ray"/>
    <property type="resolution" value="3.28 A"/>
    <property type="chains" value="C=1-251"/>
</dbReference>
<dbReference type="PDB" id="7U6K">
    <property type="method" value="X-ray"/>
    <property type="resolution" value="2.38 A"/>
    <property type="chains" value="C=1-251"/>
</dbReference>
<dbReference type="PDB" id="7U7O">
    <property type="method" value="X-ray"/>
    <property type="resolution" value="2.97 A"/>
    <property type="chains" value="C=1-251"/>
</dbReference>
<dbReference type="PDB" id="7UFX">
    <property type="method" value="X-ray"/>
    <property type="resolution" value="2.80 A"/>
    <property type="chains" value="C=1-251"/>
</dbReference>
<dbReference type="PDB" id="7UOG">
    <property type="method" value="X-ray"/>
    <property type="resolution" value="2.63 A"/>
    <property type="chains" value="C=1-251"/>
</dbReference>
<dbReference type="PDB" id="7UR0">
    <property type="method" value="X-ray"/>
    <property type="resolution" value="3.30 A"/>
    <property type="chains" value="C=1-251"/>
</dbReference>
<dbReference type="PDB" id="7UV6">
    <property type="method" value="X-ray"/>
    <property type="resolution" value="2.72 A"/>
    <property type="chains" value="C=1-251"/>
</dbReference>
<dbReference type="PDB" id="7UV7">
    <property type="method" value="X-ray"/>
    <property type="resolution" value="3.02 A"/>
    <property type="chains" value="C=1-251"/>
</dbReference>
<dbReference type="PDB" id="7UXY">
    <property type="method" value="X-ray"/>
    <property type="resolution" value="3.15 A"/>
    <property type="chains" value="C=1-251"/>
</dbReference>
<dbReference type="PDB" id="8AAN">
    <property type="method" value="X-ray"/>
    <property type="resolution" value="2.19 A"/>
    <property type="chains" value="A=1-251"/>
</dbReference>
<dbReference type="PDB" id="8AC8">
    <property type="method" value="X-ray"/>
    <property type="resolution" value="1.60 A"/>
    <property type="chains" value="A/C=1-251"/>
</dbReference>
<dbReference type="PDB" id="8D86">
    <property type="method" value="X-ray"/>
    <property type="resolution" value="3.12 A"/>
    <property type="chains" value="C=1-251"/>
</dbReference>
<dbReference type="PDB" id="8D8M">
    <property type="method" value="X-ray"/>
    <property type="resolution" value="3.10 A"/>
    <property type="chains" value="C=1-251"/>
</dbReference>
<dbReference type="PDB" id="8TIP">
    <property type="method" value="X-ray"/>
    <property type="resolution" value="2.79 A"/>
    <property type="chains" value="C=1-251"/>
</dbReference>
<dbReference type="PDB" id="8TIQ">
    <property type="method" value="X-ray"/>
    <property type="resolution" value="2.45 A"/>
    <property type="chains" value="C=1-251"/>
</dbReference>
<dbReference type="PDB" id="8TIR">
    <property type="method" value="X-ray"/>
    <property type="resolution" value="3.11 A"/>
    <property type="chains" value="C=1-251"/>
</dbReference>
<dbReference type="PDB" id="8TIS">
    <property type="method" value="X-ray"/>
    <property type="resolution" value="2.54 A"/>
    <property type="chains" value="C=1-251"/>
</dbReference>
<dbReference type="PDB" id="8TIT">
    <property type="method" value="X-ray"/>
    <property type="resolution" value="2.84 A"/>
    <property type="chains" value="C=1-251"/>
</dbReference>
<dbReference type="PDB" id="8TIU">
    <property type="method" value="X-ray"/>
    <property type="resolution" value="3.90 A"/>
    <property type="chains" value="C=1-251"/>
</dbReference>
<dbReference type="PDB" id="8TIV">
    <property type="method" value="X-ray"/>
    <property type="resolution" value="3.35 A"/>
    <property type="chains" value="C=1-251"/>
</dbReference>
<dbReference type="PDB" id="8TIW">
    <property type="method" value="X-ray"/>
    <property type="resolution" value="3.11 A"/>
    <property type="chains" value="C=1-251"/>
</dbReference>
<dbReference type="PDB" id="8TIX">
    <property type="method" value="X-ray"/>
    <property type="resolution" value="2.91 A"/>
    <property type="chains" value="C=1-251"/>
</dbReference>
<dbReference type="PDB" id="8TIY">
    <property type="method" value="X-ray"/>
    <property type="resolution" value="3.11 A"/>
    <property type="chains" value="C=1-251"/>
</dbReference>
<dbReference type="PDB" id="8TIZ">
    <property type="method" value="X-ray"/>
    <property type="resolution" value="3.11 A"/>
    <property type="chains" value="C=1-251"/>
</dbReference>
<dbReference type="PDB" id="8TJ0">
    <property type="method" value="X-ray"/>
    <property type="resolution" value="3.24 A"/>
    <property type="chains" value="C=1-251"/>
</dbReference>
<dbReference type="PDB" id="8TJ1">
    <property type="method" value="X-ray"/>
    <property type="resolution" value="3.15 A"/>
    <property type="chains" value="C=1-251"/>
</dbReference>
<dbReference type="PDBsum" id="1REP"/>
<dbReference type="PDBsum" id="2Z9O"/>
<dbReference type="PDBsum" id="7RVA"/>
<dbReference type="PDBsum" id="7SDP"/>
<dbReference type="PDBsum" id="7SGC"/>
<dbReference type="PDBsum" id="7SOZ"/>
<dbReference type="PDBsum" id="7SPM"/>
<dbReference type="PDBsum" id="7U6K"/>
<dbReference type="PDBsum" id="7U7O"/>
<dbReference type="PDBsum" id="7UFX"/>
<dbReference type="PDBsum" id="7UOG"/>
<dbReference type="PDBsum" id="7UR0"/>
<dbReference type="PDBsum" id="7UV6"/>
<dbReference type="PDBsum" id="7UV7"/>
<dbReference type="PDBsum" id="7UXY"/>
<dbReference type="PDBsum" id="8AAN"/>
<dbReference type="PDBsum" id="8AC8"/>
<dbReference type="PDBsum" id="8D86"/>
<dbReference type="PDBsum" id="8D8M"/>
<dbReference type="PDBsum" id="8TIP"/>
<dbReference type="PDBsum" id="8TIQ"/>
<dbReference type="PDBsum" id="8TIR"/>
<dbReference type="PDBsum" id="8TIS"/>
<dbReference type="PDBsum" id="8TIT"/>
<dbReference type="PDBsum" id="8TIU"/>
<dbReference type="PDBsum" id="8TIV"/>
<dbReference type="PDBsum" id="8TIW"/>
<dbReference type="PDBsum" id="8TIX"/>
<dbReference type="PDBsum" id="8TIY"/>
<dbReference type="PDBsum" id="8TIZ"/>
<dbReference type="PDBsum" id="8TJ0"/>
<dbReference type="PDBsum" id="8TJ1"/>
<dbReference type="SMR" id="P03856"/>
<dbReference type="DIP" id="DIP-27645N"/>
<dbReference type="KEGG" id="ecoc:C3026_24335"/>
<dbReference type="PhylomeDB" id="P03856"/>
<dbReference type="EvolutionaryTrace" id="P03856"/>
<dbReference type="PRO" id="PR:P03856"/>
<dbReference type="GO" id="GO:0003677">
    <property type="term" value="F:DNA binding"/>
    <property type="evidence" value="ECO:0007669"/>
    <property type="project" value="UniProtKB-KW"/>
</dbReference>
<dbReference type="GO" id="GO:0003887">
    <property type="term" value="F:DNA-directed DNA polymerase activity"/>
    <property type="evidence" value="ECO:0007669"/>
    <property type="project" value="InterPro"/>
</dbReference>
<dbReference type="GO" id="GO:0006270">
    <property type="term" value="P:DNA replication initiation"/>
    <property type="evidence" value="ECO:0007669"/>
    <property type="project" value="InterPro"/>
</dbReference>
<dbReference type="GO" id="GO:0006276">
    <property type="term" value="P:plasmid maintenance"/>
    <property type="evidence" value="ECO:0007669"/>
    <property type="project" value="UniProtKB-KW"/>
</dbReference>
<dbReference type="Gene3D" id="1.10.10.10">
    <property type="entry name" value="Winged helix-like DNA-binding domain superfamily/Winged helix DNA-binding domain"/>
    <property type="match status" value="2"/>
</dbReference>
<dbReference type="InterPro" id="IPR000525">
    <property type="entry name" value="Initiator_Rep_WH1"/>
</dbReference>
<dbReference type="InterPro" id="IPR036388">
    <property type="entry name" value="WH-like_DNA-bd_sf"/>
</dbReference>
<dbReference type="InterPro" id="IPR036390">
    <property type="entry name" value="WH_DNA-bd_sf"/>
</dbReference>
<dbReference type="NCBIfam" id="NF010305">
    <property type="entry name" value="PRK13742.1"/>
    <property type="match status" value="1"/>
</dbReference>
<dbReference type="Pfam" id="PF21205">
    <property type="entry name" value="Rep3_C"/>
    <property type="match status" value="1"/>
</dbReference>
<dbReference type="Pfam" id="PF01051">
    <property type="entry name" value="Rep3_N"/>
    <property type="match status" value="1"/>
</dbReference>
<dbReference type="SUPFAM" id="SSF46785">
    <property type="entry name" value="Winged helix' DNA-binding domain"/>
    <property type="match status" value="2"/>
</dbReference>
<accession>P03856</accession>
<accession>P08969</accession>
<organism>
    <name type="scientific">Escherichia coli (strain K12)</name>
    <dbReference type="NCBI Taxonomy" id="83333"/>
    <lineage>
        <taxon>Bacteria</taxon>
        <taxon>Pseudomonadati</taxon>
        <taxon>Pseudomonadota</taxon>
        <taxon>Gammaproteobacteria</taxon>
        <taxon>Enterobacterales</taxon>
        <taxon>Enterobacteriaceae</taxon>
        <taxon>Escherichia</taxon>
    </lineage>
</organism>
<comment type="function">
    <text>Replication initiator in the monomeric form, and autogenous repressor in the dimeric form.</text>
</comment>
<comment type="subunit">
    <text evidence="1">Monomer and homodimer.</text>
</comment>
<comment type="similarity">
    <text evidence="2">Belongs to the initiator RepB protein family.</text>
</comment>
<protein>
    <recommendedName>
        <fullName>Replication initiation protein</fullName>
        <shortName>Protein E</shortName>
        <shortName>Protein rep</shortName>
    </recommendedName>
    <alternativeName>
        <fullName>Protein F4</fullName>
    </alternativeName>
</protein>
<proteinExistence type="evidence at protein level"/>
<evidence type="ECO:0000269" key="1">
    <source>
    </source>
</evidence>
<evidence type="ECO:0000305" key="2"/>
<evidence type="ECO:0007829" key="3">
    <source>
        <dbReference type="PDB" id="7SPM"/>
    </source>
</evidence>
<evidence type="ECO:0007829" key="4">
    <source>
        <dbReference type="PDB" id="8AAN"/>
    </source>
</evidence>
<evidence type="ECO:0007829" key="5">
    <source>
        <dbReference type="PDB" id="8AC8"/>
    </source>
</evidence>
<gene>
    <name type="primary">repE</name>
    <name type="synonym">E</name>
    <name type="synonym">rep</name>
    <name type="ordered locus">ECOK12F045</name>
</gene>
<reference key="1">
    <citation type="journal article" date="1981" name="Gene">
        <title>Nine unique repeating sequences in a region essential for replication and incompatibility of the mini-F plasmid.</title>
        <authorList>
            <person name="Murotsu T."/>
            <person name="Matsubara K."/>
            <person name="Sugisaki H."/>
            <person name="Takanami M."/>
        </authorList>
    </citation>
    <scope>NUCLEOTIDE SEQUENCE [GENOMIC DNA]</scope>
</reference>
<reference key="2">
    <citation type="submission" date="1986-08" db="EMBL/GenBank/DDBJ databases">
        <title>F plasmid DNA complete mini-F region (F coordinates 40.301F to 49.869F).</title>
        <authorList>
            <person name="Eichenlaub R."/>
        </authorList>
    </citation>
    <scope>NUCLEOTIDE SEQUENCE [GENOMIC DNA]</scope>
</reference>
<reference key="3">
    <citation type="submission" date="2000-04" db="EMBL/GenBank/DDBJ databases">
        <title>Complete nucleotide sequence of the F plasmid: its implications for organization and diversification of plasmid genomes.</title>
        <authorList>
            <person name="Shimizu H."/>
            <person name="Saitoh Y."/>
            <person name="Suda Y."/>
            <person name="Uehara K."/>
            <person name="Sampei G."/>
            <person name="Mizobuchi K."/>
        </authorList>
    </citation>
    <scope>NUCLEOTIDE SEQUENCE [LARGE SCALE GENOMIC DNA]</scope>
    <source>
        <strain>K12 / CR63</strain>
    </source>
</reference>
<reference key="4">
    <citation type="journal article" date="1981" name="Cell">
        <title>Direct repeats of the F plasmid incC region express F incompatibility.</title>
        <authorList>
            <person name="Tolun A."/>
            <person name="Helinski D.R."/>
        </authorList>
    </citation>
    <scope>NUCLEOTIDE SEQUENCE [GENOMIC DNA] OF 211-251</scope>
</reference>
<reference key="5">
    <citation type="journal article" date="1986" name="Mol. Gen. Genet.">
        <title>The repeated sequences (incB) preceding the protein E gene of plasmid mini-F are essential for replication.</title>
        <authorList>
            <person name="Disque-Kochem C."/>
            <person name="Seidel U."/>
            <person name="Helsberg M."/>
            <person name="Eichenlaub R."/>
        </authorList>
    </citation>
    <scope>NUCLEOTIDE SEQUENCE [GENOMIC DNA] OF 1-17</scope>
</reference>
<reference key="6">
    <citation type="journal article" date="1986" name="J. Mol. Biol.">
        <title>Structure and function of the F plasmid genes essential for partitioning.</title>
        <authorList>
            <person name="Mori H."/>
            <person name="Kondo A."/>
            <person name="Ohshima A."/>
            <person name="Ogura T."/>
            <person name="Hiraga S."/>
        </authorList>
    </citation>
    <scope>NUCLEOTIDE SEQUENCE [GENOMIC DNA] OF 209-251</scope>
    <source>
        <strain>K12</strain>
    </source>
</reference>
<reference key="7">
    <citation type="journal article" date="1999" name="EMBO J.">
        <title>Crystal structure of a prokaryotic replication initiator protein bound to DNA at 2.6 A resolution.</title>
        <authorList>
            <person name="Komori H."/>
            <person name="Matsunaga F."/>
            <person name="Higuchi Y."/>
            <person name="Ishiai M."/>
            <person name="Wada C."/>
            <person name="Miki K."/>
        </authorList>
    </citation>
    <scope>X-RAY CRYSTALLOGRAPHY (2.6 ANGSTROMS) IN COMPLEX WITH DNA</scope>
</reference>
<name>REPE1_ECOLI</name>